<evidence type="ECO:0000250" key="1"/>
<evidence type="ECO:0000250" key="2">
    <source>
        <dbReference type="UniProtKB" id="O95551"/>
    </source>
</evidence>
<evidence type="ECO:0000256" key="3">
    <source>
        <dbReference type="SAM" id="MobiDB-lite"/>
    </source>
</evidence>
<evidence type="ECO:0000303" key="4">
    <source ref="3"/>
</evidence>
<evidence type="ECO:0000303" key="5">
    <source ref="4"/>
</evidence>
<evidence type="ECO:0000305" key="6"/>
<name>CCR4E_ARATH</name>
<accession>Q0WKY2</accession>
<accession>Q6NNI4</accession>
<dbReference type="EC" id="3.1.13.4"/>
<dbReference type="EMBL" id="AC016662">
    <property type="status" value="NOT_ANNOTATED_CDS"/>
    <property type="molecule type" value="Genomic_DNA"/>
</dbReference>
<dbReference type="EMBL" id="CP002684">
    <property type="protein sequence ID" value="AEE35519.1"/>
    <property type="molecule type" value="Genomic_DNA"/>
</dbReference>
<dbReference type="EMBL" id="BT010832">
    <property type="protein sequence ID" value="AAR24199.1"/>
    <property type="molecule type" value="mRNA"/>
</dbReference>
<dbReference type="EMBL" id="BT011303">
    <property type="protein sequence ID" value="AAR92339.1"/>
    <property type="molecule type" value="mRNA"/>
</dbReference>
<dbReference type="EMBL" id="AK230427">
    <property type="protein sequence ID" value="BAF02225.1"/>
    <property type="molecule type" value="mRNA"/>
</dbReference>
<dbReference type="RefSeq" id="NP_683491.2">
    <molecule id="Q0WKY2-1"/>
    <property type="nucleotide sequence ID" value="NM_148650.4"/>
</dbReference>
<dbReference type="SMR" id="Q0WKY2"/>
<dbReference type="FunCoup" id="Q0WKY2">
    <property type="interactions" value="3451"/>
</dbReference>
<dbReference type="STRING" id="3702.Q0WKY2"/>
<dbReference type="PaxDb" id="3702-AT1G73875.1"/>
<dbReference type="EnsemblPlants" id="AT1G73875.1">
    <molecule id="Q0WKY2-1"/>
    <property type="protein sequence ID" value="AT1G73875.1"/>
    <property type="gene ID" value="AT1G73875"/>
</dbReference>
<dbReference type="GeneID" id="843724"/>
<dbReference type="Gramene" id="AT1G73875.1">
    <molecule id="Q0WKY2-1"/>
    <property type="protein sequence ID" value="AT1G73875.1"/>
    <property type="gene ID" value="AT1G73875"/>
</dbReference>
<dbReference type="KEGG" id="ath:AT1G73875"/>
<dbReference type="Araport" id="AT1G73875"/>
<dbReference type="TAIR" id="AT1G73875">
    <property type="gene designation" value="CCR4E"/>
</dbReference>
<dbReference type="eggNOG" id="KOG2338">
    <property type="taxonomic scope" value="Eukaryota"/>
</dbReference>
<dbReference type="HOGENOM" id="CLU_016428_0_0_1"/>
<dbReference type="InParanoid" id="Q0WKY2"/>
<dbReference type="OMA" id="YIWHTED"/>
<dbReference type="OrthoDB" id="428734at2759"/>
<dbReference type="PhylomeDB" id="Q0WKY2"/>
<dbReference type="PRO" id="PR:Q0WKY2"/>
<dbReference type="Proteomes" id="UP000006548">
    <property type="component" value="Chromosome 1"/>
</dbReference>
<dbReference type="ExpressionAtlas" id="Q0WKY2">
    <property type="expression patterns" value="baseline and differential"/>
</dbReference>
<dbReference type="GO" id="GO:0005737">
    <property type="term" value="C:cytoplasm"/>
    <property type="evidence" value="ECO:0007669"/>
    <property type="project" value="UniProtKB-SubCell"/>
</dbReference>
<dbReference type="GO" id="GO:0005634">
    <property type="term" value="C:nucleus"/>
    <property type="evidence" value="ECO:0007669"/>
    <property type="project" value="UniProtKB-SubCell"/>
</dbReference>
<dbReference type="GO" id="GO:0046872">
    <property type="term" value="F:metal ion binding"/>
    <property type="evidence" value="ECO:0007669"/>
    <property type="project" value="UniProtKB-KW"/>
</dbReference>
<dbReference type="GO" id="GO:0004535">
    <property type="term" value="F:poly(A)-specific ribonuclease activity"/>
    <property type="evidence" value="ECO:0007669"/>
    <property type="project" value="UniProtKB-EC"/>
</dbReference>
<dbReference type="GO" id="GO:0003723">
    <property type="term" value="F:RNA binding"/>
    <property type="evidence" value="ECO:0007669"/>
    <property type="project" value="UniProtKB-KW"/>
</dbReference>
<dbReference type="Gene3D" id="3.60.10.10">
    <property type="entry name" value="Endonuclease/exonuclease/phosphatase"/>
    <property type="match status" value="1"/>
</dbReference>
<dbReference type="InterPro" id="IPR050410">
    <property type="entry name" value="CCR4/nocturin_mRNA_transcr"/>
</dbReference>
<dbReference type="InterPro" id="IPR036691">
    <property type="entry name" value="Endo/exonu/phosph_ase_sf"/>
</dbReference>
<dbReference type="InterPro" id="IPR005135">
    <property type="entry name" value="Endo/exonuclease/phosphatase"/>
</dbReference>
<dbReference type="PANTHER" id="PTHR12121">
    <property type="entry name" value="CARBON CATABOLITE REPRESSOR PROTEIN 4"/>
    <property type="match status" value="1"/>
</dbReference>
<dbReference type="PANTHER" id="PTHR12121:SF74">
    <property type="entry name" value="CARBON CATABOLITE REPRESSOR PROTEIN 4 HOMOLOG 5"/>
    <property type="match status" value="1"/>
</dbReference>
<dbReference type="Pfam" id="PF03372">
    <property type="entry name" value="Exo_endo_phos"/>
    <property type="match status" value="1"/>
</dbReference>
<dbReference type="SUPFAM" id="SSF56219">
    <property type="entry name" value="DNase I-like"/>
    <property type="match status" value="1"/>
</dbReference>
<reference key="1">
    <citation type="journal article" date="2000" name="Nature">
        <title>Sequence and analysis of chromosome 1 of the plant Arabidopsis thaliana.</title>
        <authorList>
            <person name="Theologis A."/>
            <person name="Ecker J.R."/>
            <person name="Palm C.J."/>
            <person name="Federspiel N.A."/>
            <person name="Kaul S."/>
            <person name="White O."/>
            <person name="Alonso J."/>
            <person name="Altafi H."/>
            <person name="Araujo R."/>
            <person name="Bowman C.L."/>
            <person name="Brooks S.Y."/>
            <person name="Buehler E."/>
            <person name="Chan A."/>
            <person name="Chao Q."/>
            <person name="Chen H."/>
            <person name="Cheuk R.F."/>
            <person name="Chin C.W."/>
            <person name="Chung M.K."/>
            <person name="Conn L."/>
            <person name="Conway A.B."/>
            <person name="Conway A.R."/>
            <person name="Creasy T.H."/>
            <person name="Dewar K."/>
            <person name="Dunn P."/>
            <person name="Etgu P."/>
            <person name="Feldblyum T.V."/>
            <person name="Feng J.-D."/>
            <person name="Fong B."/>
            <person name="Fujii C.Y."/>
            <person name="Gill J.E."/>
            <person name="Goldsmith A.D."/>
            <person name="Haas B."/>
            <person name="Hansen N.F."/>
            <person name="Hughes B."/>
            <person name="Huizar L."/>
            <person name="Hunter J.L."/>
            <person name="Jenkins J."/>
            <person name="Johnson-Hopson C."/>
            <person name="Khan S."/>
            <person name="Khaykin E."/>
            <person name="Kim C.J."/>
            <person name="Koo H.L."/>
            <person name="Kremenetskaia I."/>
            <person name="Kurtz D.B."/>
            <person name="Kwan A."/>
            <person name="Lam B."/>
            <person name="Langin-Hooper S."/>
            <person name="Lee A."/>
            <person name="Lee J.M."/>
            <person name="Lenz C.A."/>
            <person name="Li J.H."/>
            <person name="Li Y.-P."/>
            <person name="Lin X."/>
            <person name="Liu S.X."/>
            <person name="Liu Z.A."/>
            <person name="Luros J.S."/>
            <person name="Maiti R."/>
            <person name="Marziali A."/>
            <person name="Militscher J."/>
            <person name="Miranda M."/>
            <person name="Nguyen M."/>
            <person name="Nierman W.C."/>
            <person name="Osborne B.I."/>
            <person name="Pai G."/>
            <person name="Peterson J."/>
            <person name="Pham P.K."/>
            <person name="Rizzo M."/>
            <person name="Rooney T."/>
            <person name="Rowley D."/>
            <person name="Sakano H."/>
            <person name="Salzberg S.L."/>
            <person name="Schwartz J.R."/>
            <person name="Shinn P."/>
            <person name="Southwick A.M."/>
            <person name="Sun H."/>
            <person name="Tallon L.J."/>
            <person name="Tambunga G."/>
            <person name="Toriumi M.J."/>
            <person name="Town C.D."/>
            <person name="Utterback T."/>
            <person name="Van Aken S."/>
            <person name="Vaysberg M."/>
            <person name="Vysotskaia V.S."/>
            <person name="Walker M."/>
            <person name="Wu D."/>
            <person name="Yu G."/>
            <person name="Fraser C.M."/>
            <person name="Venter J.C."/>
            <person name="Davis R.W."/>
        </authorList>
    </citation>
    <scope>NUCLEOTIDE SEQUENCE [LARGE SCALE GENOMIC DNA]</scope>
    <source>
        <strain>cv. Columbia</strain>
    </source>
</reference>
<reference key="2">
    <citation type="journal article" date="2017" name="Plant J.">
        <title>Araport11: a complete reannotation of the Arabidopsis thaliana reference genome.</title>
        <authorList>
            <person name="Cheng C.Y."/>
            <person name="Krishnakumar V."/>
            <person name="Chan A.P."/>
            <person name="Thibaud-Nissen F."/>
            <person name="Schobel S."/>
            <person name="Town C.D."/>
        </authorList>
    </citation>
    <scope>GENOME REANNOTATION</scope>
    <source>
        <strain>cv. Columbia</strain>
    </source>
</reference>
<reference key="3">
    <citation type="submission" date="2004-01" db="EMBL/GenBank/DDBJ databases">
        <title>Arabidopsis ORF clones.</title>
        <authorList>
            <person name="Cheuk R.F."/>
            <person name="Chen H."/>
            <person name="Kim C.J."/>
            <person name="Shinn P."/>
            <person name="Ecker J.R."/>
        </authorList>
    </citation>
    <scope>NUCLEOTIDE SEQUENCE [LARGE SCALE MRNA] (ISOFORM 3)</scope>
    <source>
        <strain>cv. Columbia</strain>
    </source>
</reference>
<reference key="4">
    <citation type="submission" date="2006-07" db="EMBL/GenBank/DDBJ databases">
        <title>Large-scale analysis of RIKEN Arabidopsis full-length (RAFL) cDNAs.</title>
        <authorList>
            <person name="Totoki Y."/>
            <person name="Seki M."/>
            <person name="Ishida J."/>
            <person name="Nakajima M."/>
            <person name="Enju A."/>
            <person name="Kamiya A."/>
            <person name="Narusaka M."/>
            <person name="Shin-i T."/>
            <person name="Nakagawa M."/>
            <person name="Sakamoto N."/>
            <person name="Oishi K."/>
            <person name="Kohara Y."/>
            <person name="Kobayashi M."/>
            <person name="Toyoda A."/>
            <person name="Sakaki Y."/>
            <person name="Sakurai T."/>
            <person name="Iida K."/>
            <person name="Akiyama K."/>
            <person name="Satou M."/>
            <person name="Toyoda T."/>
            <person name="Konagaya A."/>
            <person name="Carninci P."/>
            <person name="Kawai J."/>
            <person name="Hayashizaki Y."/>
            <person name="Shinozaki K."/>
        </authorList>
    </citation>
    <scope>NUCLEOTIDE SEQUENCE [LARGE SCALE MRNA] (ISOFORM 2)</scope>
    <source>
        <strain>cv. Columbia</strain>
    </source>
</reference>
<organism>
    <name type="scientific">Arabidopsis thaliana</name>
    <name type="common">Mouse-ear cress</name>
    <dbReference type="NCBI Taxonomy" id="3702"/>
    <lineage>
        <taxon>Eukaryota</taxon>
        <taxon>Viridiplantae</taxon>
        <taxon>Streptophyta</taxon>
        <taxon>Embryophyta</taxon>
        <taxon>Tracheophyta</taxon>
        <taxon>Spermatophyta</taxon>
        <taxon>Magnoliopsida</taxon>
        <taxon>eudicotyledons</taxon>
        <taxon>Gunneridae</taxon>
        <taxon>Pentapetalae</taxon>
        <taxon>rosids</taxon>
        <taxon>malvids</taxon>
        <taxon>Brassicales</taxon>
        <taxon>Brassicaceae</taxon>
        <taxon>Camelineae</taxon>
        <taxon>Arabidopsis</taxon>
    </lineage>
</organism>
<keyword id="KW-0025">Alternative splicing</keyword>
<keyword id="KW-0963">Cytoplasm</keyword>
<keyword id="KW-0269">Exonuclease</keyword>
<keyword id="KW-0378">Hydrolase</keyword>
<keyword id="KW-0460">Magnesium</keyword>
<keyword id="KW-0479">Metal-binding</keyword>
<keyword id="KW-0540">Nuclease</keyword>
<keyword id="KW-0539">Nucleus</keyword>
<keyword id="KW-1185">Reference proteome</keyword>
<keyword id="KW-0677">Repeat</keyword>
<keyword id="KW-0694">RNA-binding</keyword>
<keyword id="KW-0804">Transcription</keyword>
<keyword id="KW-0805">Transcription regulation</keyword>
<feature type="chain" id="PRO_0000355048" description="Carbon catabolite repressor protein 4 homolog 5">
    <location>
        <begin position="1"/>
        <end position="454"/>
    </location>
</feature>
<feature type="region of interest" description="Disordered" evidence="3">
    <location>
        <begin position="1"/>
        <end position="76"/>
    </location>
</feature>
<feature type="compositionally biased region" description="Basic and acidic residues" evidence="3">
    <location>
        <begin position="31"/>
        <end position="41"/>
    </location>
</feature>
<feature type="compositionally biased region" description="Basic residues" evidence="3">
    <location>
        <begin position="61"/>
        <end position="75"/>
    </location>
</feature>
<feature type="binding site" evidence="2">
    <location>
        <position position="153"/>
    </location>
    <ligand>
        <name>Mg(2+)</name>
        <dbReference type="ChEBI" id="CHEBI:18420"/>
    </ligand>
</feature>
<feature type="splice variant" id="VSP_035833" description="In isoform 3." evidence="4">
    <location>
        <begin position="1"/>
        <end position="219"/>
    </location>
</feature>
<feature type="splice variant" id="VSP_035834" description="In isoform 2." evidence="5">
    <original>S</original>
    <variation>I</variation>
    <location>
        <position position="175"/>
    </location>
</feature>
<feature type="splice variant" id="VSP_035835" description="In isoform 2." evidence="5">
    <location>
        <begin position="176"/>
        <end position="454"/>
    </location>
</feature>
<feature type="splice variant" id="VSP_035836" description="In isoform 3." evidence="4">
    <original>NWGSDHLAIACELGFVNDWQ</original>
    <variation>VSFFF</variation>
    <location>
        <begin position="435"/>
        <end position="454"/>
    </location>
</feature>
<gene>
    <name type="primary">CCR4-5</name>
    <name type="ordered locus">At1g73875</name>
    <name type="ORF">F2P9.30</name>
</gene>
<sequence>MSGYERKNTTANSITITKRKRNSISEQSENVYEKSNRKESITLKPHRSFTPGFSQRDCKPVRHSKSSLRRRRRTKEKISSSVEREWVFSANNFENLADKLVLVSYNLLGVDNASNHMDLYYNVPRKHLEWSRRKHLICKEISRYNASILCLQEVDRFDDLDVLLKNRGFRGVHKSRTGEASDGCAIFWKENLFELLDHQHIEFDKFGMRNNVAQLCVLEMNCEEDPKSKLRVRSSDPRRLVVGNIHVLFNPKRGDIKLGQVRLFLEKAYKLSQEWGNIPVAIAGDLNSTPQSAIYDFIASADLDTQLHDRRQISGQTEVEPKERSFRNHYAFSASASISGSLLNEWSQEELQLATGGQETTHVQHQLKLNSAYSGVPGTYRTRDQRGEPLATTYHSRFLGTVDYIWHTKELVPVRVLETLPADVLRRTGGLPSENWGSDHLAIACELGFVNDWQ</sequence>
<proteinExistence type="evidence at transcript level"/>
<comment type="function">
    <text evidence="1">Acts as a catalytic component of the CCR4-NOT core complex, which in the nucleus seems to be a general transcription factor, and in the cytoplasm the major mRNA deadenylase involved in mRNA turnover.</text>
</comment>
<comment type="catalytic activity">
    <reaction>
        <text>Exonucleolytic cleavage of poly(A) to 5'-AMP.</text>
        <dbReference type="EC" id="3.1.13.4"/>
    </reaction>
</comment>
<comment type="cofactor">
    <cofactor evidence="1">
        <name>Mg(2+)</name>
        <dbReference type="ChEBI" id="CHEBI:18420"/>
    </cofactor>
</comment>
<comment type="subunit">
    <text evidence="1">Component of the CCR4-NOT complex, at least composed of CRR4 and CAF1 proteins.</text>
</comment>
<comment type="subcellular location">
    <subcellularLocation>
        <location evidence="1">Nucleus</location>
    </subcellularLocation>
    <subcellularLocation>
        <location evidence="1">Cytoplasm</location>
    </subcellularLocation>
</comment>
<comment type="alternative products">
    <event type="alternative splicing"/>
    <isoform>
        <id>Q0WKY2-1</id>
        <name>1</name>
        <sequence type="displayed"/>
    </isoform>
    <isoform>
        <id>Q0WKY2-2</id>
        <name>2</name>
        <sequence type="described" ref="VSP_035834 VSP_035835"/>
    </isoform>
    <isoform>
        <id>Q0WKY2-3</id>
        <name>3</name>
        <sequence type="described" ref="VSP_035833 VSP_035836"/>
    </isoform>
</comment>
<comment type="miscellaneous">
    <molecule>Isoform 3</molecule>
    <text evidence="6">May be due to intron retention.</text>
</comment>
<comment type="similarity">
    <text evidence="6">Belongs to the CCR4/nocturin family.</text>
</comment>
<protein>
    <recommendedName>
        <fullName>Carbon catabolite repressor protein 4 homolog 5</fullName>
        <shortName>CCR4 homolog 5</shortName>
        <ecNumber>3.1.13.4</ecNumber>
    </recommendedName>
</protein>